<sequence length="239" mass="25542">MAATLVAARGTRPAPAWGPEAIAPDWENREVSTGTTIMAVQFDGGVVLGADSRTTTGSYIANRVTDKLTPIHDRIFCCRSGSAADTQAVADAVTYQLGFHSIELNEPPLVHTAASLFKEMCYRYREDLMAGIIIAGWDPQEGGQVYSVPMGGMMVRQPFAIGGSGSSYIYGYVDATYREGMTKEECLQFTANALALAMERDGSSGGVIRLAAIAEPGVERQVLLGDQIPKFTIATLPPL</sequence>
<feature type="initiator methionine" description="Removed" evidence="2">
    <location>
        <position position="1"/>
    </location>
</feature>
<feature type="propeptide" id="PRO_0000239858" description="Removed in mature form" evidence="1">
    <location>
        <begin position="2"/>
        <end position="34"/>
    </location>
</feature>
<feature type="chain" id="PRO_0000239859" description="Proteasome subunit beta type-6">
    <location>
        <begin position="35"/>
        <end position="239"/>
    </location>
</feature>
<feature type="active site" description="Nucleophile" evidence="2">
    <location>
        <position position="35"/>
    </location>
</feature>
<feature type="modified residue" description="N-acetylalanine" evidence="2">
    <location>
        <position position="2"/>
    </location>
</feature>
<feature type="modified residue" description="Phosphothreonine" evidence="2">
    <location>
        <position position="69"/>
    </location>
</feature>
<feature type="strand" evidence="5">
    <location>
        <begin position="37"/>
        <end position="42"/>
    </location>
</feature>
<feature type="strand" evidence="5">
    <location>
        <begin position="45"/>
        <end position="50"/>
    </location>
</feature>
<feature type="strand" evidence="5">
    <location>
        <begin position="54"/>
        <end position="56"/>
    </location>
</feature>
<feature type="strand" evidence="5">
    <location>
        <begin position="59"/>
        <end position="64"/>
    </location>
</feature>
<feature type="strand" evidence="5">
    <location>
        <begin position="68"/>
        <end position="72"/>
    </location>
</feature>
<feature type="strand" evidence="5">
    <location>
        <begin position="75"/>
        <end position="81"/>
    </location>
</feature>
<feature type="helix" evidence="5">
    <location>
        <begin position="83"/>
        <end position="104"/>
    </location>
</feature>
<feature type="helix" evidence="5">
    <location>
        <begin position="110"/>
        <end position="123"/>
    </location>
</feature>
<feature type="turn" evidence="5">
    <location>
        <begin position="124"/>
        <end position="127"/>
    </location>
</feature>
<feature type="strand" evidence="5">
    <location>
        <begin position="130"/>
        <end position="138"/>
    </location>
</feature>
<feature type="turn" evidence="5">
    <location>
        <begin position="139"/>
        <end position="141"/>
    </location>
</feature>
<feature type="strand" evidence="5">
    <location>
        <begin position="142"/>
        <end position="148"/>
    </location>
</feature>
<feature type="strand" evidence="5">
    <location>
        <begin position="158"/>
        <end position="163"/>
    </location>
</feature>
<feature type="helix" evidence="5">
    <location>
        <begin position="164"/>
        <end position="169"/>
    </location>
</feature>
<feature type="helix" evidence="5">
    <location>
        <begin position="170"/>
        <end position="176"/>
    </location>
</feature>
<feature type="helix" evidence="5">
    <location>
        <begin position="183"/>
        <end position="200"/>
    </location>
</feature>
<feature type="strand" evidence="5">
    <location>
        <begin position="208"/>
        <end position="216"/>
    </location>
</feature>
<feature type="strand" evidence="5">
    <location>
        <begin position="218"/>
        <end position="223"/>
    </location>
</feature>
<feature type="helix" evidence="5">
    <location>
        <begin position="225"/>
        <end position="227"/>
    </location>
</feature>
<reference key="1">
    <citation type="submission" date="2005-09" db="EMBL/GenBank/DDBJ databases">
        <authorList>
            <consortium name="NIH - Mammalian Gene Collection (MGC) project"/>
        </authorList>
    </citation>
    <scope>NUCLEOTIDE SEQUENCE [LARGE SCALE MRNA]</scope>
    <source>
        <strain>Crossbred X Angus</strain>
        <tissue>Ileum</tissue>
    </source>
</reference>
<reference key="2">
    <citation type="journal article" date="2002" name="Structure">
        <title>The structure of the mammalian 20S proteasome at 2.75 A resolution.</title>
        <authorList>
            <person name="Unno M."/>
            <person name="Mizushima T."/>
            <person name="Morimoto Y."/>
            <person name="Tomisugi Y."/>
            <person name="Tanaka K."/>
            <person name="Yasuoka N."/>
            <person name="Tsukihara T."/>
        </authorList>
    </citation>
    <scope>X-RAY CRYSTALLOGRAPHY (2.75 ANGSTROMS) OF 35-239 OF COMPLEX WITH 20S PROTEASOME</scope>
</reference>
<organism>
    <name type="scientific">Bos taurus</name>
    <name type="common">Bovine</name>
    <dbReference type="NCBI Taxonomy" id="9913"/>
    <lineage>
        <taxon>Eukaryota</taxon>
        <taxon>Metazoa</taxon>
        <taxon>Chordata</taxon>
        <taxon>Craniata</taxon>
        <taxon>Vertebrata</taxon>
        <taxon>Euteleostomi</taxon>
        <taxon>Mammalia</taxon>
        <taxon>Eutheria</taxon>
        <taxon>Laurasiatheria</taxon>
        <taxon>Artiodactyla</taxon>
        <taxon>Ruminantia</taxon>
        <taxon>Pecora</taxon>
        <taxon>Bovidae</taxon>
        <taxon>Bovinae</taxon>
        <taxon>Bos</taxon>
    </lineage>
</organism>
<dbReference type="EC" id="3.4.25.1" evidence="2"/>
<dbReference type="EMBL" id="BC105176">
    <property type="protein sequence ID" value="AAI05177.1"/>
    <property type="molecule type" value="mRNA"/>
</dbReference>
<dbReference type="RefSeq" id="NP_001029541.1">
    <property type="nucleotide sequence ID" value="NM_001034369.2"/>
</dbReference>
<dbReference type="PDB" id="1IRU">
    <property type="method" value="X-ray"/>
    <property type="resolution" value="2.75 A"/>
    <property type="chains" value="H/V=35-238"/>
</dbReference>
<dbReference type="PDB" id="8AZK">
    <property type="method" value="EM"/>
    <property type="resolution" value="3.10 A"/>
    <property type="chains" value="H/V=35-239"/>
</dbReference>
<dbReference type="PDB" id="8FZ5">
    <property type="method" value="EM"/>
    <property type="resolution" value="2.23 A"/>
    <property type="chains" value="H/V=1-239"/>
</dbReference>
<dbReference type="PDB" id="8FZ6">
    <property type="method" value="EM"/>
    <property type="resolution" value="2.54 A"/>
    <property type="chains" value="H/V=1-239"/>
</dbReference>
<dbReference type="PDBsum" id="1IRU"/>
<dbReference type="PDBsum" id="8AZK"/>
<dbReference type="PDBsum" id="8FZ5"/>
<dbReference type="PDBsum" id="8FZ6"/>
<dbReference type="EMDB" id="EMD-15767"/>
<dbReference type="EMDB" id="EMD-29603"/>
<dbReference type="EMDB" id="EMD-29604"/>
<dbReference type="SMR" id="Q3MHN0"/>
<dbReference type="FunCoup" id="Q3MHN0">
    <property type="interactions" value="3566"/>
</dbReference>
<dbReference type="STRING" id="9913.ENSBTAP00000017816"/>
<dbReference type="MEROPS" id="T01.020"/>
<dbReference type="PaxDb" id="9913-ENSBTAP00000017816"/>
<dbReference type="PeptideAtlas" id="Q3MHN0"/>
<dbReference type="GeneID" id="510069"/>
<dbReference type="KEGG" id="bta:510069"/>
<dbReference type="CTD" id="5694"/>
<dbReference type="VEuPathDB" id="HostDB:ENSBTAG00000013390"/>
<dbReference type="eggNOG" id="KOG0174">
    <property type="taxonomic scope" value="Eukaryota"/>
</dbReference>
<dbReference type="HOGENOM" id="CLU_035750_5_2_1"/>
<dbReference type="InParanoid" id="Q3MHN0"/>
<dbReference type="OMA" id="TFIYGYC"/>
<dbReference type="OrthoDB" id="7854943at2759"/>
<dbReference type="TreeFam" id="TF106221"/>
<dbReference type="Reactome" id="R-BTA-1169091">
    <property type="pathway name" value="Activation of NF-kappaB in B cells"/>
</dbReference>
<dbReference type="Reactome" id="R-BTA-1234176">
    <property type="pathway name" value="Oxygen-dependent proline hydroxylation of Hypoxia-inducible Factor Alpha"/>
</dbReference>
<dbReference type="Reactome" id="R-BTA-1236978">
    <property type="pathway name" value="Cross-presentation of soluble exogenous antigens (endosomes)"/>
</dbReference>
<dbReference type="Reactome" id="R-BTA-174084">
    <property type="pathway name" value="Autodegradation of Cdh1 by Cdh1:APC/C"/>
</dbReference>
<dbReference type="Reactome" id="R-BTA-174154">
    <property type="pathway name" value="APC/C:Cdc20 mediated degradation of Securin"/>
</dbReference>
<dbReference type="Reactome" id="R-BTA-174178">
    <property type="pathway name" value="APC/C:Cdh1 mediated degradation of Cdc20 and other APC/C:Cdh1 targeted proteins in late mitosis/early G1"/>
</dbReference>
<dbReference type="Reactome" id="R-BTA-174184">
    <property type="pathway name" value="Cdc20:Phospho-APC/C mediated degradation of Cyclin A"/>
</dbReference>
<dbReference type="Reactome" id="R-BTA-187577">
    <property type="pathway name" value="SCF(Skp2)-mediated degradation of p27/p21"/>
</dbReference>
<dbReference type="Reactome" id="R-BTA-195253">
    <property type="pathway name" value="Degradation of beta-catenin by the destruction complex"/>
</dbReference>
<dbReference type="Reactome" id="R-BTA-202424">
    <property type="pathway name" value="Downstream TCR signaling"/>
</dbReference>
<dbReference type="Reactome" id="R-BTA-2467813">
    <property type="pathway name" value="Separation of Sister Chromatids"/>
</dbReference>
<dbReference type="Reactome" id="R-BTA-2871837">
    <property type="pathway name" value="FCERI mediated NF-kB activation"/>
</dbReference>
<dbReference type="Reactome" id="R-BTA-349425">
    <property type="pathway name" value="Autodegradation of the E3 ubiquitin ligase COP1"/>
</dbReference>
<dbReference type="Reactome" id="R-BTA-350562">
    <property type="pathway name" value="Regulation of ornithine decarboxylase (ODC)"/>
</dbReference>
<dbReference type="Reactome" id="R-BTA-382556">
    <property type="pathway name" value="ABC-family proteins mediated transport"/>
</dbReference>
<dbReference type="Reactome" id="R-BTA-450408">
    <property type="pathway name" value="AUF1 (hnRNP D0) binds and destabilizes mRNA"/>
</dbReference>
<dbReference type="Reactome" id="R-BTA-4608870">
    <property type="pathway name" value="Asymmetric localization of PCP proteins"/>
</dbReference>
<dbReference type="Reactome" id="R-BTA-4641257">
    <property type="pathway name" value="Degradation of AXIN"/>
</dbReference>
<dbReference type="Reactome" id="R-BTA-4641258">
    <property type="pathway name" value="Degradation of DVL"/>
</dbReference>
<dbReference type="Reactome" id="R-BTA-5358346">
    <property type="pathway name" value="Hedgehog ligand biogenesis"/>
</dbReference>
<dbReference type="Reactome" id="R-BTA-5607761">
    <property type="pathway name" value="Dectin-1 mediated noncanonical NF-kB signaling"/>
</dbReference>
<dbReference type="Reactome" id="R-BTA-5607764">
    <property type="pathway name" value="CLEC7A (Dectin-1) signaling"/>
</dbReference>
<dbReference type="Reactome" id="R-BTA-5610780">
    <property type="pathway name" value="Degradation of GLI1 by the proteasome"/>
</dbReference>
<dbReference type="Reactome" id="R-BTA-5610785">
    <property type="pathway name" value="GLI3 is processed to GLI3R by the proteasome"/>
</dbReference>
<dbReference type="Reactome" id="R-BTA-5632684">
    <property type="pathway name" value="Hedgehog 'on' state"/>
</dbReference>
<dbReference type="Reactome" id="R-BTA-5668541">
    <property type="pathway name" value="TNFR2 non-canonical NF-kB pathway"/>
</dbReference>
<dbReference type="Reactome" id="R-BTA-5676590">
    <property type="pathway name" value="NIK--&gt;noncanonical NF-kB signaling"/>
</dbReference>
<dbReference type="Reactome" id="R-BTA-5687128">
    <property type="pathway name" value="MAPK6/MAPK4 signaling"/>
</dbReference>
<dbReference type="Reactome" id="R-BTA-5689603">
    <property type="pathway name" value="UCH proteinases"/>
</dbReference>
<dbReference type="Reactome" id="R-BTA-5689880">
    <property type="pathway name" value="Ub-specific processing proteases"/>
</dbReference>
<dbReference type="Reactome" id="R-BTA-68867">
    <property type="pathway name" value="Assembly of the pre-replicative complex"/>
</dbReference>
<dbReference type="Reactome" id="R-BTA-68949">
    <property type="pathway name" value="Orc1 removal from chromatin"/>
</dbReference>
<dbReference type="Reactome" id="R-BTA-69017">
    <property type="pathway name" value="CDK-mediated phosphorylation and removal of Cdc6"/>
</dbReference>
<dbReference type="Reactome" id="R-BTA-69481">
    <property type="pathway name" value="G2/M Checkpoints"/>
</dbReference>
<dbReference type="Reactome" id="R-BTA-69601">
    <property type="pathway name" value="Ubiquitin Mediated Degradation of Phosphorylated Cdc25A"/>
</dbReference>
<dbReference type="Reactome" id="R-BTA-75815">
    <property type="pathway name" value="Ubiquitin-dependent degradation of Cyclin D"/>
</dbReference>
<dbReference type="Reactome" id="R-BTA-8852276">
    <property type="pathway name" value="The role of GTSE1 in G2/M progression after G2 checkpoint"/>
</dbReference>
<dbReference type="Reactome" id="R-BTA-8854050">
    <property type="pathway name" value="FBXL7 down-regulates AURKA during mitotic entry and in early mitosis"/>
</dbReference>
<dbReference type="Reactome" id="R-BTA-8939236">
    <property type="pathway name" value="RUNX1 regulates transcription of genes involved in differentiation of HSCs"/>
</dbReference>
<dbReference type="Reactome" id="R-BTA-8939902">
    <property type="pathway name" value="Regulation of RUNX2 expression and activity"/>
</dbReference>
<dbReference type="Reactome" id="R-BTA-8941858">
    <property type="pathway name" value="Regulation of RUNX3 expression and activity"/>
</dbReference>
<dbReference type="Reactome" id="R-BTA-8948751">
    <property type="pathway name" value="Regulation of PTEN stability and activity"/>
</dbReference>
<dbReference type="Reactome" id="R-BTA-8951664">
    <property type="pathway name" value="Neddylation"/>
</dbReference>
<dbReference type="Reactome" id="R-BTA-9020702">
    <property type="pathway name" value="Interleukin-1 signaling"/>
</dbReference>
<dbReference type="Reactome" id="R-BTA-9755511">
    <property type="pathway name" value="KEAP1-NFE2L2 pathway"/>
</dbReference>
<dbReference type="Reactome" id="R-BTA-9762114">
    <property type="pathway name" value="GSK3B and BTRC:CUL1-mediated-degradation of NFE2L2"/>
</dbReference>
<dbReference type="Reactome" id="R-BTA-983168">
    <property type="pathway name" value="Antigen processing: Ubiquitination &amp; Proteasome degradation"/>
</dbReference>
<dbReference type="Reactome" id="R-BTA-9907900">
    <property type="pathway name" value="Proteasome assembly"/>
</dbReference>
<dbReference type="EvolutionaryTrace" id="Q3MHN0"/>
<dbReference type="Proteomes" id="UP000009136">
    <property type="component" value="Chromosome 19"/>
</dbReference>
<dbReference type="Bgee" id="ENSBTAG00000013390">
    <property type="expression patterns" value="Expressed in laryngeal cartilage and 105 other cell types or tissues"/>
</dbReference>
<dbReference type="GO" id="GO:0005829">
    <property type="term" value="C:cytosol"/>
    <property type="evidence" value="ECO:0000318"/>
    <property type="project" value="GO_Central"/>
</dbReference>
<dbReference type="GO" id="GO:0005634">
    <property type="term" value="C:nucleus"/>
    <property type="evidence" value="ECO:0000318"/>
    <property type="project" value="GO_Central"/>
</dbReference>
<dbReference type="GO" id="GO:0005839">
    <property type="term" value="C:proteasome core complex"/>
    <property type="evidence" value="ECO:0000250"/>
    <property type="project" value="UniProtKB"/>
</dbReference>
<dbReference type="GO" id="GO:0019774">
    <property type="term" value="C:proteasome core complex, beta-subunit complex"/>
    <property type="evidence" value="ECO:0000250"/>
    <property type="project" value="UniProtKB"/>
</dbReference>
<dbReference type="GO" id="GO:0004175">
    <property type="term" value="F:endopeptidase activity"/>
    <property type="evidence" value="ECO:0000318"/>
    <property type="project" value="GO_Central"/>
</dbReference>
<dbReference type="GO" id="GO:0004298">
    <property type="term" value="F:threonine-type endopeptidase activity"/>
    <property type="evidence" value="ECO:0007669"/>
    <property type="project" value="UniProtKB-KW"/>
</dbReference>
<dbReference type="GO" id="GO:0043161">
    <property type="term" value="P:proteasome-mediated ubiquitin-dependent protein catabolic process"/>
    <property type="evidence" value="ECO:0000318"/>
    <property type="project" value="GO_Central"/>
</dbReference>
<dbReference type="CDD" id="cd03762">
    <property type="entry name" value="proteasome_beta_type_6"/>
    <property type="match status" value="1"/>
</dbReference>
<dbReference type="FunFam" id="3.60.20.10:FF:000010">
    <property type="entry name" value="Proteasome subunit beta type-1"/>
    <property type="match status" value="1"/>
</dbReference>
<dbReference type="Gene3D" id="3.60.20.10">
    <property type="entry name" value="Glutamine Phosphoribosylpyrophosphate, subunit 1, domain 1"/>
    <property type="match status" value="1"/>
</dbReference>
<dbReference type="InterPro" id="IPR029055">
    <property type="entry name" value="Ntn_hydrolases_N"/>
</dbReference>
<dbReference type="InterPro" id="IPR000243">
    <property type="entry name" value="Pept_T1A_subB"/>
</dbReference>
<dbReference type="InterPro" id="IPR016050">
    <property type="entry name" value="Proteasome_bsu_CS"/>
</dbReference>
<dbReference type="InterPro" id="IPR001353">
    <property type="entry name" value="Proteasome_sua/b"/>
</dbReference>
<dbReference type="InterPro" id="IPR023333">
    <property type="entry name" value="Proteasome_suB-type"/>
</dbReference>
<dbReference type="PANTHER" id="PTHR32194">
    <property type="entry name" value="METALLOPROTEASE TLDD"/>
    <property type="match status" value="1"/>
</dbReference>
<dbReference type="PANTHER" id="PTHR32194:SF14">
    <property type="entry name" value="PROTEASOME SUBUNIT BETA"/>
    <property type="match status" value="1"/>
</dbReference>
<dbReference type="Pfam" id="PF00227">
    <property type="entry name" value="Proteasome"/>
    <property type="match status" value="1"/>
</dbReference>
<dbReference type="PRINTS" id="PR00141">
    <property type="entry name" value="PROTEASOME"/>
</dbReference>
<dbReference type="SUPFAM" id="SSF56235">
    <property type="entry name" value="N-terminal nucleophile aminohydrolases (Ntn hydrolases)"/>
    <property type="match status" value="1"/>
</dbReference>
<dbReference type="PROSITE" id="PS00854">
    <property type="entry name" value="PROTEASOME_BETA_1"/>
    <property type="match status" value="1"/>
</dbReference>
<dbReference type="PROSITE" id="PS51476">
    <property type="entry name" value="PROTEASOME_BETA_2"/>
    <property type="match status" value="1"/>
</dbReference>
<proteinExistence type="evidence at protein level"/>
<keyword id="KW-0002">3D-structure</keyword>
<keyword id="KW-0007">Acetylation</keyword>
<keyword id="KW-0963">Cytoplasm</keyword>
<keyword id="KW-0378">Hydrolase</keyword>
<keyword id="KW-0539">Nucleus</keyword>
<keyword id="KW-0597">Phosphoprotein</keyword>
<keyword id="KW-0645">Protease</keyword>
<keyword id="KW-0647">Proteasome</keyword>
<keyword id="KW-1185">Reference proteome</keyword>
<keyword id="KW-0888">Threonine protease</keyword>
<keyword id="KW-0865">Zymogen</keyword>
<evidence type="ECO:0000250" key="1"/>
<evidence type="ECO:0000250" key="2">
    <source>
        <dbReference type="UniProtKB" id="P28072"/>
    </source>
</evidence>
<evidence type="ECO:0000255" key="3">
    <source>
        <dbReference type="PROSITE-ProRule" id="PRU00809"/>
    </source>
</evidence>
<evidence type="ECO:0000269" key="4">
    <source>
    </source>
</evidence>
<evidence type="ECO:0007829" key="5">
    <source>
        <dbReference type="PDB" id="8FZ5"/>
    </source>
</evidence>
<comment type="function">
    <text evidence="2">Component of the 20S core proteasome complex involved in the proteolytic degradation of most intracellular proteins. This complex plays numerous essential roles within the cell by associating with different regulatory particles. Associated with two 19S regulatory particles, forms the 26S proteasome and thus participates in the ATP-dependent degradation of ubiquitinated proteins. The 26S proteasome plays a key role in the maintenance of protein homeostasis by removing misfolded or damaged proteins that could impair cellular functions, and by removing proteins whose functions are no longer required. Associated with the PA200 or PA28, the 20S proteasome mediates ubiquitin-independent protein degradation. This type of proteolysis is required in several pathways including spermatogenesis (20S-PA200 complex) or generation of a subset of MHC class I-presented antigenic peptides (20S-PA28 complex). Within the 20S core complex, PSMB6 displays a peptidylglutamyl-hydrolyzing activity also termed postacidic or caspase-like activity, meaning that the peptides bond hydrolysis occurs directly after acidic residues.</text>
</comment>
<comment type="catalytic activity">
    <reaction evidence="2">
        <text>Cleavage of peptide bonds with very broad specificity.</text>
        <dbReference type="EC" id="3.4.25.1"/>
    </reaction>
</comment>
<comment type="subunit">
    <text evidence="4">The 26S proteasome consists of a 20S proteasome core and two 19S regulatory subunits. The 20S proteasome core is a barrel-shaped complex made of 28 subunits that are arranged in four stacked rings. The two outer rings are each formed by seven alpha subunits, and the two inner rings are formed by seven beta subunits. The proteolytic activity is exerted by three beta-subunits PSMB5, PSMB6 and PSMB7.</text>
</comment>
<comment type="subcellular location">
    <subcellularLocation>
        <location evidence="2">Cytoplasm</location>
    </subcellularLocation>
    <subcellularLocation>
        <location evidence="2">Nucleus</location>
    </subcellularLocation>
    <text evidence="2">Translocated from the cytoplasm into the nucleus following interaction with AKIRIN2, which bridges the proteasome with the nuclear import receptor IPO9.</text>
</comment>
<comment type="similarity">
    <text evidence="3">Belongs to the peptidase T1B family.</text>
</comment>
<name>PSB6_BOVIN</name>
<protein>
    <recommendedName>
        <fullName>Proteasome subunit beta type-6</fullName>
        <ecNumber evidence="2">3.4.25.1</ecNumber>
    </recommendedName>
</protein>
<accession>Q3MHN0</accession>
<gene>
    <name type="primary">PSMB6</name>
</gene>